<feature type="chain" id="PRO_1000004197" description="Large ribosomal subunit protein bL33">
    <location>
        <begin position="1"/>
        <end position="64"/>
    </location>
</feature>
<reference key="1">
    <citation type="journal article" date="2007" name="ISME J.">
        <title>Population level functional diversity in a microbial community revealed by comparative genomic and metagenomic analyses.</title>
        <authorList>
            <person name="Bhaya D."/>
            <person name="Grossman A.R."/>
            <person name="Steunou A.-S."/>
            <person name="Khuri N."/>
            <person name="Cohan F.M."/>
            <person name="Hamamura N."/>
            <person name="Melendrez M.C."/>
            <person name="Bateson M.M."/>
            <person name="Ward D.M."/>
            <person name="Heidelberg J.F."/>
        </authorList>
    </citation>
    <scope>NUCLEOTIDE SEQUENCE [LARGE SCALE GENOMIC DNA]</scope>
    <source>
        <strain>JA-3-3Ab</strain>
    </source>
</reference>
<proteinExistence type="inferred from homology"/>
<accession>Q2JU21</accession>
<organism>
    <name type="scientific">Synechococcus sp. (strain JA-3-3Ab)</name>
    <name type="common">Cyanobacteria bacterium Yellowstone A-Prime</name>
    <dbReference type="NCBI Taxonomy" id="321327"/>
    <lineage>
        <taxon>Bacteria</taxon>
        <taxon>Bacillati</taxon>
        <taxon>Cyanobacteriota</taxon>
        <taxon>Cyanophyceae</taxon>
        <taxon>Synechococcales</taxon>
        <taxon>Synechococcaceae</taxon>
        <taxon>Synechococcus</taxon>
    </lineage>
</organism>
<sequence length="64" mass="7430">MAKAKGARIIITLECTECRTNVNKRSPGVNRYTTTKNRRNTTARLELKKFCPKCNRHTVHKEIK</sequence>
<gene>
    <name evidence="1" type="primary">rpmG</name>
    <name evidence="1" type="synonym">rpl33</name>
    <name type="ordered locus">CYA_1652</name>
</gene>
<dbReference type="EMBL" id="CP000239">
    <property type="protein sequence ID" value="ABC99808.1"/>
    <property type="molecule type" value="Genomic_DNA"/>
</dbReference>
<dbReference type="RefSeq" id="WP_011430486.1">
    <property type="nucleotide sequence ID" value="NC_007775.1"/>
</dbReference>
<dbReference type="STRING" id="321327.CYA_1652"/>
<dbReference type="KEGG" id="cya:CYA_1652"/>
<dbReference type="eggNOG" id="COG0267">
    <property type="taxonomic scope" value="Bacteria"/>
</dbReference>
<dbReference type="HOGENOM" id="CLU_190949_3_0_3"/>
<dbReference type="Proteomes" id="UP000008818">
    <property type="component" value="Chromosome"/>
</dbReference>
<dbReference type="GO" id="GO:0005737">
    <property type="term" value="C:cytoplasm"/>
    <property type="evidence" value="ECO:0007669"/>
    <property type="project" value="UniProtKB-ARBA"/>
</dbReference>
<dbReference type="GO" id="GO:1990904">
    <property type="term" value="C:ribonucleoprotein complex"/>
    <property type="evidence" value="ECO:0007669"/>
    <property type="project" value="UniProtKB-KW"/>
</dbReference>
<dbReference type="GO" id="GO:0005840">
    <property type="term" value="C:ribosome"/>
    <property type="evidence" value="ECO:0007669"/>
    <property type="project" value="UniProtKB-KW"/>
</dbReference>
<dbReference type="GO" id="GO:0003735">
    <property type="term" value="F:structural constituent of ribosome"/>
    <property type="evidence" value="ECO:0007669"/>
    <property type="project" value="InterPro"/>
</dbReference>
<dbReference type="GO" id="GO:0006412">
    <property type="term" value="P:translation"/>
    <property type="evidence" value="ECO:0007669"/>
    <property type="project" value="UniProtKB-UniRule"/>
</dbReference>
<dbReference type="Gene3D" id="2.20.28.120">
    <property type="entry name" value="Ribosomal protein L33"/>
    <property type="match status" value="1"/>
</dbReference>
<dbReference type="HAMAP" id="MF_00294">
    <property type="entry name" value="Ribosomal_bL33"/>
    <property type="match status" value="1"/>
</dbReference>
<dbReference type="InterPro" id="IPR001705">
    <property type="entry name" value="Ribosomal_bL33"/>
</dbReference>
<dbReference type="InterPro" id="IPR018264">
    <property type="entry name" value="Ribosomal_bL33_CS"/>
</dbReference>
<dbReference type="InterPro" id="IPR038584">
    <property type="entry name" value="Ribosomal_bL33_sf"/>
</dbReference>
<dbReference type="InterPro" id="IPR011332">
    <property type="entry name" value="Ribosomal_zn-bd"/>
</dbReference>
<dbReference type="NCBIfam" id="NF001764">
    <property type="entry name" value="PRK00504.1"/>
    <property type="match status" value="1"/>
</dbReference>
<dbReference type="NCBIfam" id="NF001860">
    <property type="entry name" value="PRK00595.1"/>
    <property type="match status" value="1"/>
</dbReference>
<dbReference type="NCBIfam" id="TIGR01023">
    <property type="entry name" value="rpmG_bact"/>
    <property type="match status" value="1"/>
</dbReference>
<dbReference type="PANTHER" id="PTHR43168">
    <property type="entry name" value="50S RIBOSOMAL PROTEIN L33, CHLOROPLASTIC"/>
    <property type="match status" value="1"/>
</dbReference>
<dbReference type="PANTHER" id="PTHR43168:SF2">
    <property type="entry name" value="LARGE RIBOSOMAL SUBUNIT PROTEIN BL33C"/>
    <property type="match status" value="1"/>
</dbReference>
<dbReference type="Pfam" id="PF00471">
    <property type="entry name" value="Ribosomal_L33"/>
    <property type="match status" value="1"/>
</dbReference>
<dbReference type="SUPFAM" id="SSF57829">
    <property type="entry name" value="Zn-binding ribosomal proteins"/>
    <property type="match status" value="1"/>
</dbReference>
<dbReference type="PROSITE" id="PS00582">
    <property type="entry name" value="RIBOSOMAL_L33"/>
    <property type="match status" value="1"/>
</dbReference>
<keyword id="KW-0687">Ribonucleoprotein</keyword>
<keyword id="KW-0689">Ribosomal protein</keyword>
<protein>
    <recommendedName>
        <fullName evidence="1">Large ribosomal subunit protein bL33</fullName>
    </recommendedName>
    <alternativeName>
        <fullName evidence="2">50S ribosomal protein L33</fullName>
    </alternativeName>
</protein>
<name>RL33_SYNJA</name>
<comment type="similarity">
    <text evidence="1">Belongs to the bacterial ribosomal protein bL33 family.</text>
</comment>
<evidence type="ECO:0000255" key="1">
    <source>
        <dbReference type="HAMAP-Rule" id="MF_00294"/>
    </source>
</evidence>
<evidence type="ECO:0000305" key="2"/>